<evidence type="ECO:0000250" key="1"/>
<evidence type="ECO:0000250" key="2">
    <source>
        <dbReference type="UniProtKB" id="P52945"/>
    </source>
</evidence>
<evidence type="ECO:0000250" key="3">
    <source>
        <dbReference type="UniProtKB" id="P52946"/>
    </source>
</evidence>
<evidence type="ECO:0000255" key="4">
    <source>
        <dbReference type="PROSITE-ProRule" id="PRU00108"/>
    </source>
</evidence>
<evidence type="ECO:0000256" key="5">
    <source>
        <dbReference type="SAM" id="MobiDB-lite"/>
    </source>
</evidence>
<evidence type="ECO:0000305" key="6"/>
<protein>
    <recommendedName>
        <fullName>Pancreas/duodenum homeobox protein 1</fullName>
    </recommendedName>
    <alternativeName>
        <fullName>Homeodomain protein PDX1</fullName>
    </alternativeName>
    <alternativeName>
        <fullName>Insulin promoter factor 1</fullName>
        <shortName>IPF-1</shortName>
    </alternativeName>
</protein>
<proteinExistence type="inferred from homology"/>
<organism>
    <name type="scientific">Pan paniscus</name>
    <name type="common">Pygmy chimpanzee</name>
    <name type="synonym">Bonobo</name>
    <dbReference type="NCBI Taxonomy" id="9597"/>
    <lineage>
        <taxon>Eukaryota</taxon>
        <taxon>Metazoa</taxon>
        <taxon>Chordata</taxon>
        <taxon>Craniata</taxon>
        <taxon>Vertebrata</taxon>
        <taxon>Euteleostomi</taxon>
        <taxon>Mammalia</taxon>
        <taxon>Eutheria</taxon>
        <taxon>Euarchontoglires</taxon>
        <taxon>Primates</taxon>
        <taxon>Haplorrhini</taxon>
        <taxon>Catarrhini</taxon>
        <taxon>Hominidae</taxon>
        <taxon>Pan</taxon>
    </lineage>
</organism>
<gene>
    <name type="primary">PDX1</name>
    <name type="synonym">IPF1</name>
</gene>
<comment type="function">
    <text evidence="1">Activates insulin and somatostatin gene transcription. Key regulator of islet peptide hormone expression but also responsible for the development of the pancreas, most probably by determining maturation and differentiation of common pancreatic precursor cells in the developing gut. As part of a PDX1:PBX1b:MEIS2b complex in pancreatic acinar cells is involved in the transcriptional activation of the ELA1 enhancer; the complex binds to the enhancer B element and cooperates with the transcription factor 1 complex (PTF1) bound to the enhancer A element. Binds the DNA sequence 5'-CC[CT]TAATGGG-3' (By similarity).</text>
</comment>
<comment type="subunit">
    <text evidence="1">Interacts with the basic helix-loop-helix domains of TCF3(E47) and NEUROD1 and with HMG-I(Y). Interacts with SPOP. Part of a PDX1:PBX1b:MEIS2b complex (By similarity).</text>
</comment>
<comment type="subcellular location">
    <subcellularLocation>
        <location evidence="4">Nucleus</location>
    </subcellularLocation>
    <subcellularLocation>
        <location evidence="1">Cytoplasm</location>
        <location evidence="1">Cytosol</location>
    </subcellularLocation>
</comment>
<comment type="domain">
    <text evidence="1">The Antp-type hexapeptide mediates heterodimerization with PBX on a regulatory element of the somatostatin promoter.</text>
</comment>
<comment type="domain">
    <text evidence="1">The homeodomain, which contains the nuclear localization signal, not only mediates DNA-binding, but also acts as a protein-protein interaction domain for TCF3(E47), NEUROD1 and HMG-I(Y).</text>
</comment>
<comment type="PTM">
    <text evidence="1">Phosphorylated by the SAPK2 pathway at high intracellular glucose concentration. Phosphorylated by HIPK2 on Ser-268 upon glucose accumulation. This phosphorylation mediates subnuclear localization shifting. Phosphorylation by PASK may lead to translocation into the cytosol (By similarity).</text>
</comment>
<comment type="similarity">
    <text evidence="6">Belongs to the Antp homeobox family. IPF1/XlHbox-8 subfamily.</text>
</comment>
<name>PDX1_PANPA</name>
<accession>A1YG85</accession>
<keyword id="KW-0010">Activator</keyword>
<keyword id="KW-0963">Cytoplasm</keyword>
<keyword id="KW-0238">DNA-binding</keyword>
<keyword id="KW-0371">Homeobox</keyword>
<keyword id="KW-0539">Nucleus</keyword>
<keyword id="KW-0597">Phosphoprotein</keyword>
<keyword id="KW-1185">Reference proteome</keyword>
<keyword id="KW-0804">Transcription</keyword>
<keyword id="KW-0805">Transcription regulation</keyword>
<dbReference type="EMBL" id="DQ977234">
    <property type="protein sequence ID" value="ABM54310.1"/>
    <property type="molecule type" value="Genomic_DNA"/>
</dbReference>
<dbReference type="BMRB" id="A1YG85"/>
<dbReference type="STRING" id="9597.ENSPPAP00000019094"/>
<dbReference type="eggNOG" id="KOG0489">
    <property type="taxonomic scope" value="Eukaryota"/>
</dbReference>
<dbReference type="Proteomes" id="UP000240080">
    <property type="component" value="Unplaced"/>
</dbReference>
<dbReference type="GO" id="GO:0005829">
    <property type="term" value="C:cytosol"/>
    <property type="evidence" value="ECO:0007669"/>
    <property type="project" value="UniProtKB-SubCell"/>
</dbReference>
<dbReference type="GO" id="GO:0005634">
    <property type="term" value="C:nucleus"/>
    <property type="evidence" value="ECO:0007669"/>
    <property type="project" value="UniProtKB-SubCell"/>
</dbReference>
<dbReference type="GO" id="GO:0000981">
    <property type="term" value="F:DNA-binding transcription factor activity, RNA polymerase II-specific"/>
    <property type="evidence" value="ECO:0007669"/>
    <property type="project" value="InterPro"/>
</dbReference>
<dbReference type="GO" id="GO:0000978">
    <property type="term" value="F:RNA polymerase II cis-regulatory region sequence-specific DNA binding"/>
    <property type="evidence" value="ECO:0007669"/>
    <property type="project" value="TreeGrafter"/>
</dbReference>
<dbReference type="GO" id="GO:0032024">
    <property type="term" value="P:positive regulation of insulin secretion"/>
    <property type="evidence" value="ECO:0000250"/>
    <property type="project" value="UniProtKB"/>
</dbReference>
<dbReference type="GO" id="GO:0045944">
    <property type="term" value="P:positive regulation of transcription by RNA polymerase II"/>
    <property type="evidence" value="ECO:0007669"/>
    <property type="project" value="UniProtKB-ARBA"/>
</dbReference>
<dbReference type="GO" id="GO:0003309">
    <property type="term" value="P:type B pancreatic cell differentiation"/>
    <property type="evidence" value="ECO:0007669"/>
    <property type="project" value="TreeGrafter"/>
</dbReference>
<dbReference type="CDD" id="cd00086">
    <property type="entry name" value="homeodomain"/>
    <property type="match status" value="1"/>
</dbReference>
<dbReference type="FunFam" id="1.10.10.60:FF:000176">
    <property type="entry name" value="pancreas/duodenum homeobox protein 1"/>
    <property type="match status" value="1"/>
</dbReference>
<dbReference type="Gene3D" id="1.10.10.60">
    <property type="entry name" value="Homeodomain-like"/>
    <property type="match status" value="1"/>
</dbReference>
<dbReference type="InterPro" id="IPR001356">
    <property type="entry name" value="HD"/>
</dbReference>
<dbReference type="InterPro" id="IPR020479">
    <property type="entry name" value="HD_metazoa"/>
</dbReference>
<dbReference type="InterPro" id="IPR017995">
    <property type="entry name" value="Homeobox_antennapedia"/>
</dbReference>
<dbReference type="InterPro" id="IPR017970">
    <property type="entry name" value="Homeobox_CS"/>
</dbReference>
<dbReference type="InterPro" id="IPR009057">
    <property type="entry name" value="Homeodomain-like_sf"/>
</dbReference>
<dbReference type="PANTHER" id="PTHR45664:SF12">
    <property type="entry name" value="PANCREAS_DUODENUM HOMEOBOX PROTEIN 1"/>
    <property type="match status" value="1"/>
</dbReference>
<dbReference type="PANTHER" id="PTHR45664">
    <property type="entry name" value="PROTEIN ZERKNUELLT 1-RELATED"/>
    <property type="match status" value="1"/>
</dbReference>
<dbReference type="Pfam" id="PF00046">
    <property type="entry name" value="Homeodomain"/>
    <property type="match status" value="1"/>
</dbReference>
<dbReference type="PRINTS" id="PR00025">
    <property type="entry name" value="ANTENNAPEDIA"/>
</dbReference>
<dbReference type="PRINTS" id="PR00024">
    <property type="entry name" value="HOMEOBOX"/>
</dbReference>
<dbReference type="SMART" id="SM00389">
    <property type="entry name" value="HOX"/>
    <property type="match status" value="1"/>
</dbReference>
<dbReference type="SUPFAM" id="SSF46689">
    <property type="entry name" value="Homeodomain-like"/>
    <property type="match status" value="1"/>
</dbReference>
<dbReference type="PROSITE" id="PS00027">
    <property type="entry name" value="HOMEOBOX_1"/>
    <property type="match status" value="1"/>
</dbReference>
<dbReference type="PROSITE" id="PS50071">
    <property type="entry name" value="HOMEOBOX_2"/>
    <property type="match status" value="1"/>
</dbReference>
<reference key="1">
    <citation type="submission" date="2006-08" db="EMBL/GenBank/DDBJ databases">
        <title>Positive selection in transcription factor genes on the human lineage.</title>
        <authorList>
            <person name="Nickel G.C."/>
            <person name="Tefft D.L."/>
            <person name="Trevarthen K."/>
            <person name="Funt J."/>
            <person name="Adams M.D."/>
        </authorList>
    </citation>
    <scope>NUCLEOTIDE SEQUENCE [GENOMIC DNA]</scope>
</reference>
<sequence>MNGEEQYYAATQLYKDSCAFQRGPAPEFSAGPPACLYMGRQPPPPPPHPFPGALGALEQGSPPDISPYEVPPLADDPAVAHLHHHLPAQLALPHPPAGPFPEGAEPGVLEEPNRVQLPFPWMKSTKAHXWKGQWAGGAYAAEPEENKRTRTAYTRAQLLELEKEFLFNKYISRPRRVELAVMLNLTERHIKIWFQNRRMKWKKEEDKKRGGGTAVGGGGVAEPEQDCAVTSGEELLALPPPPPPGGAVPPAAPVAAREGRLPPGLSASPQPSSVAPRRPQEPR</sequence>
<feature type="chain" id="PRO_0000285453" description="Pancreas/duodenum homeobox protein 1">
    <location>
        <begin position="1"/>
        <end position="283"/>
    </location>
</feature>
<feature type="DNA-binding region" description="Homeobox" evidence="4">
    <location>
        <begin position="146"/>
        <end position="205"/>
    </location>
</feature>
<feature type="region of interest" description="Transactivation domain" evidence="1">
    <location>
        <begin position="13"/>
        <end position="73"/>
    </location>
</feature>
<feature type="region of interest" description="Disordered" evidence="5">
    <location>
        <begin position="34"/>
        <end position="72"/>
    </location>
</feature>
<feature type="region of interest" description="Disordered" evidence="5">
    <location>
        <begin position="201"/>
        <end position="283"/>
    </location>
</feature>
<feature type="short sequence motif" description="Antp-type hexapeptide">
    <location>
        <begin position="118"/>
        <end position="123"/>
    </location>
</feature>
<feature type="short sequence motif" description="Nuclear localization signal" evidence="1">
    <location>
        <begin position="197"/>
        <end position="203"/>
    </location>
</feature>
<feature type="compositionally biased region" description="Pro residues" evidence="5">
    <location>
        <begin position="41"/>
        <end position="50"/>
    </location>
</feature>
<feature type="compositionally biased region" description="Gly residues" evidence="5">
    <location>
        <begin position="211"/>
        <end position="220"/>
    </location>
</feature>
<feature type="compositionally biased region" description="Pro residues" evidence="5">
    <location>
        <begin position="238"/>
        <end position="252"/>
    </location>
</feature>
<feature type="modified residue" description="Phosphothreonine; by PASK" evidence="3">
    <location>
        <position position="151"/>
    </location>
</feature>
<feature type="modified residue" description="Phosphoserine; by HIPK2" evidence="2">
    <location>
        <position position="268"/>
    </location>
</feature>